<proteinExistence type="evidence at transcript level"/>
<keyword id="KW-0963">Cytoplasm</keyword>
<keyword id="KW-0472">Membrane</keyword>
<keyword id="KW-0539">Nucleus</keyword>
<keyword id="KW-0560">Oxidoreductase</keyword>
<keyword id="KW-0653">Protein transport</keyword>
<keyword id="KW-1185">Reference proteome</keyword>
<keyword id="KW-0711">Selenium</keyword>
<keyword id="KW-0813">Transport</keyword>
<name>SBP1_DANRE</name>
<sequence length="457" mass="50983">MASTCSGCGPGYKTPLDAMKGPREEIVYLPCIYRNTDIQKPDYLATVDINPQSPNFCKVIHRLPMPNLKDELHHSGWNACSSCFDDPSKRRNRLILPSLISSRIYVVDVGTDPRAPRLHKTVEPTDLFWKCGLANPHTSHCLGSGQIMISTMGDPSGNGKGGFVLLDGETFEVIGNWEQPGDAAPFGYDFWYQPRHNVMISTEWGAPKALGNGFNPADVKAGHYGQRLHVWDWTTHKRIQTLDLGEEGAIPLEVRFLHDPAAAEGFVGCALQSTVFRFYKTPKGDWAAEKVIKVPSKKVEGWALPDMPGLITDILISLDDRFLYFSNWLHGDIRQYDITDRKNPRMVGQVFLGGSVLKDGPVKVLEDKELDSQPTPRILKGKRLYVTTSLYSAWDKQFYPDLIKEGSVMMQIDVNTDTGGLKLNENFLVDFGAEPEGPALAHELRYPGGDCTSDIWL</sequence>
<gene>
    <name type="primary">selenbp1</name>
</gene>
<comment type="function">
    <text evidence="1 2">Catalyzes the oxidation of methanethiol, an organosulfur compound known to be produced in substantial amounts by gut bacteria (By similarity). Selenium-binding protein which may be involved in the sensing of reactive xenobiotics in the cytoplasm. May be involved in intra-Golgi protein transport (By similarity).</text>
</comment>
<comment type="catalytic activity">
    <reaction evidence="1">
        <text>methanethiol + O2 + H2O = hydrogen sulfide + formaldehyde + H2O2 + H(+)</text>
        <dbReference type="Rhea" id="RHEA:11812"/>
        <dbReference type="ChEBI" id="CHEBI:15377"/>
        <dbReference type="ChEBI" id="CHEBI:15378"/>
        <dbReference type="ChEBI" id="CHEBI:15379"/>
        <dbReference type="ChEBI" id="CHEBI:16007"/>
        <dbReference type="ChEBI" id="CHEBI:16240"/>
        <dbReference type="ChEBI" id="CHEBI:16842"/>
        <dbReference type="ChEBI" id="CHEBI:29919"/>
        <dbReference type="EC" id="1.8.3.4"/>
    </reaction>
</comment>
<comment type="pathway">
    <text evidence="1">Organosulfur degradation.</text>
</comment>
<comment type="subcellular location">
    <subcellularLocation>
        <location evidence="1">Nucleus</location>
    </subcellularLocation>
    <subcellularLocation>
        <location evidence="1">Cytoplasm</location>
        <location evidence="1">Cytosol</location>
    </subcellularLocation>
    <subcellularLocation>
        <location evidence="2">Membrane</location>
        <topology evidence="2">Peripheral membrane protein</topology>
    </subcellularLocation>
</comment>
<comment type="similarity">
    <text evidence="3">Belongs to the selenium-binding protein family.</text>
</comment>
<accession>Q6PHD9</accession>
<evidence type="ECO:0000250" key="1">
    <source>
        <dbReference type="UniProtKB" id="Q13228"/>
    </source>
</evidence>
<evidence type="ECO:0000250" key="2">
    <source>
        <dbReference type="UniProtKB" id="Q8VIF7"/>
    </source>
</evidence>
<evidence type="ECO:0000305" key="3"/>
<reference key="1">
    <citation type="submission" date="2003-08" db="EMBL/GenBank/DDBJ databases">
        <authorList>
            <consortium name="NIH - Zebrafish Gene Collection (ZGC) project"/>
        </authorList>
    </citation>
    <scope>NUCLEOTIDE SEQUENCE [LARGE SCALE MRNA]</scope>
    <source>
        <tissue>Kidney</tissue>
    </source>
</reference>
<feature type="chain" id="PRO_0000289064" description="Methanethiol oxidase">
    <location>
        <begin position="1"/>
        <end position="457"/>
    </location>
</feature>
<dbReference type="EC" id="1.8.3.4" evidence="1"/>
<dbReference type="EMBL" id="BC056590">
    <property type="protein sequence ID" value="AAH56590.1"/>
    <property type="molecule type" value="mRNA"/>
</dbReference>
<dbReference type="RefSeq" id="NP_956864.1">
    <property type="nucleotide sequence ID" value="NM_200570.1"/>
</dbReference>
<dbReference type="SMR" id="Q6PHD9"/>
<dbReference type="FunCoup" id="Q6PHD9">
    <property type="interactions" value="1197"/>
</dbReference>
<dbReference type="STRING" id="7955.ENSDARP00000116604"/>
<dbReference type="PaxDb" id="7955-ENSDARP00000116604"/>
<dbReference type="GeneID" id="393542"/>
<dbReference type="KEGG" id="dre:393542"/>
<dbReference type="AGR" id="ZFIN:ZDB-GENE-040426-1436"/>
<dbReference type="CTD" id="8991"/>
<dbReference type="ZFIN" id="ZDB-GENE-040426-1436">
    <property type="gene designation" value="selenbp1"/>
</dbReference>
<dbReference type="eggNOG" id="KOG0918">
    <property type="taxonomic scope" value="Eukaryota"/>
</dbReference>
<dbReference type="InParanoid" id="Q6PHD9"/>
<dbReference type="OrthoDB" id="10252446at2759"/>
<dbReference type="PhylomeDB" id="Q6PHD9"/>
<dbReference type="PRO" id="PR:Q6PHD9"/>
<dbReference type="Proteomes" id="UP000000437">
    <property type="component" value="Alternate scaffold 16"/>
</dbReference>
<dbReference type="Proteomes" id="UP000000437">
    <property type="component" value="Chromosome 16"/>
</dbReference>
<dbReference type="GO" id="GO:0005829">
    <property type="term" value="C:cytosol"/>
    <property type="evidence" value="ECO:0007669"/>
    <property type="project" value="UniProtKB-SubCell"/>
</dbReference>
<dbReference type="GO" id="GO:0016020">
    <property type="term" value="C:membrane"/>
    <property type="evidence" value="ECO:0007669"/>
    <property type="project" value="UniProtKB-SubCell"/>
</dbReference>
<dbReference type="GO" id="GO:0005634">
    <property type="term" value="C:nucleus"/>
    <property type="evidence" value="ECO:0007669"/>
    <property type="project" value="UniProtKB-SubCell"/>
</dbReference>
<dbReference type="GO" id="GO:0018549">
    <property type="term" value="F:methanethiol oxidase activity"/>
    <property type="evidence" value="ECO:0007669"/>
    <property type="project" value="UniProtKB-EC"/>
</dbReference>
<dbReference type="GO" id="GO:0008430">
    <property type="term" value="F:selenium binding"/>
    <property type="evidence" value="ECO:0007669"/>
    <property type="project" value="InterPro"/>
</dbReference>
<dbReference type="GO" id="GO:0015031">
    <property type="term" value="P:protein transport"/>
    <property type="evidence" value="ECO:0007669"/>
    <property type="project" value="UniProtKB-KW"/>
</dbReference>
<dbReference type="InterPro" id="IPR008826">
    <property type="entry name" value="Se-bd"/>
</dbReference>
<dbReference type="PANTHER" id="PTHR23300">
    <property type="entry name" value="METHANETHIOL OXIDASE"/>
    <property type="match status" value="1"/>
</dbReference>
<dbReference type="PANTHER" id="PTHR23300:SF0">
    <property type="entry name" value="METHANETHIOL OXIDASE"/>
    <property type="match status" value="1"/>
</dbReference>
<dbReference type="Pfam" id="PF05694">
    <property type="entry name" value="SBP56"/>
    <property type="match status" value="1"/>
</dbReference>
<dbReference type="SUPFAM" id="SSF75011">
    <property type="entry name" value="3-carboxy-cis,cis-mucoante lactonizing enzyme"/>
    <property type="match status" value="1"/>
</dbReference>
<protein>
    <recommendedName>
        <fullName evidence="1">Methanethiol oxidase</fullName>
        <shortName evidence="1">MTO</shortName>
        <ecNumber evidence="1">1.8.3.4</ecNumber>
    </recommendedName>
    <alternativeName>
        <fullName>Selenium-binding protein 1</fullName>
    </alternativeName>
</protein>
<organism>
    <name type="scientific">Danio rerio</name>
    <name type="common">Zebrafish</name>
    <name type="synonym">Brachydanio rerio</name>
    <dbReference type="NCBI Taxonomy" id="7955"/>
    <lineage>
        <taxon>Eukaryota</taxon>
        <taxon>Metazoa</taxon>
        <taxon>Chordata</taxon>
        <taxon>Craniata</taxon>
        <taxon>Vertebrata</taxon>
        <taxon>Euteleostomi</taxon>
        <taxon>Actinopterygii</taxon>
        <taxon>Neopterygii</taxon>
        <taxon>Teleostei</taxon>
        <taxon>Ostariophysi</taxon>
        <taxon>Cypriniformes</taxon>
        <taxon>Danionidae</taxon>
        <taxon>Danioninae</taxon>
        <taxon>Danio</taxon>
    </lineage>
</organism>